<proteinExistence type="evidence at protein level"/>
<comment type="function">
    <text evidence="1">Snake venom phospholipase A2 (PLA2) that inhibits neuromuscular transmission by blocking acetylcholine release from the nerve termini. PLA2 catalyzes the calcium-dependent hydrolysis of the 2-acyl groups in 3-sn-phosphoglycerides (By similarity).</text>
</comment>
<comment type="catalytic activity">
    <reaction evidence="2 3">
        <text>a 1,2-diacyl-sn-glycero-3-phosphocholine + H2O = a 1-acyl-sn-glycero-3-phosphocholine + a fatty acid + H(+)</text>
        <dbReference type="Rhea" id="RHEA:15801"/>
        <dbReference type="ChEBI" id="CHEBI:15377"/>
        <dbReference type="ChEBI" id="CHEBI:15378"/>
        <dbReference type="ChEBI" id="CHEBI:28868"/>
        <dbReference type="ChEBI" id="CHEBI:57643"/>
        <dbReference type="ChEBI" id="CHEBI:58168"/>
        <dbReference type="EC" id="3.1.1.4"/>
    </reaction>
</comment>
<comment type="cofactor">
    <cofactor evidence="1">
        <name>Ca(2+)</name>
        <dbReference type="ChEBI" id="CHEBI:29108"/>
    </cofactor>
    <text evidence="1">Binds 1 Ca(2+) ion.</text>
</comment>
<comment type="subcellular location">
    <subcellularLocation>
        <location>Secreted</location>
    </subcellularLocation>
</comment>
<comment type="tissue specificity">
    <text>Expressed by the venom gland.</text>
</comment>
<comment type="PTM">
    <text evidence="1">Contains seven disulfide bonds.</text>
</comment>
<comment type="mass spectrometry"/>
<comment type="similarity">
    <text evidence="5">Belongs to the phospholipase A2 family. Group II subfamily.</text>
</comment>
<comment type="caution">
    <text evidence="5">Surprinsingly, this protein (from the Elapidae family) shows a high similarity with phospholipases A2 from the Viperidae family, which belongs to the group II of phospholipases A2, in contrast to the Elapidae family that belongs to the group I.</text>
</comment>
<keyword id="KW-0106">Calcium</keyword>
<keyword id="KW-0903">Direct protein sequencing</keyword>
<keyword id="KW-1015">Disulfide bond</keyword>
<keyword id="KW-0378">Hydrolase</keyword>
<keyword id="KW-0442">Lipid degradation</keyword>
<keyword id="KW-0443">Lipid metabolism</keyword>
<keyword id="KW-0479">Metal-binding</keyword>
<keyword id="KW-0528">Neurotoxin</keyword>
<keyword id="KW-0638">Presynaptic neurotoxin</keyword>
<keyword id="KW-0964">Secreted</keyword>
<keyword id="KW-0800">Toxin</keyword>
<accession>P0CAS9</accession>
<feature type="chain" id="PRO_0000376926" description="Phospholipase A2 B1">
    <location>
        <begin position="1"/>
        <end position="34" status="greater than"/>
    </location>
</feature>
<feature type="binding site" evidence="1">
    <location>
        <position position="27"/>
    </location>
    <ligand>
        <name>Ca(2+)</name>
        <dbReference type="ChEBI" id="CHEBI:29108"/>
    </ligand>
</feature>
<feature type="binding site" evidence="1">
    <location>
        <position position="29"/>
    </location>
    <ligand>
        <name>Ca(2+)</name>
        <dbReference type="ChEBI" id="CHEBI:29108"/>
    </ligand>
</feature>
<feature type="binding site" evidence="1">
    <location>
        <position position="31"/>
    </location>
    <ligand>
        <name>Ca(2+)</name>
        <dbReference type="ChEBI" id="CHEBI:29108"/>
    </ligand>
</feature>
<feature type="non-terminal residue">
    <location>
        <position position="34"/>
    </location>
</feature>
<protein>
    <recommendedName>
        <fullName>Phospholipase A2 B1</fullName>
        <shortName>svPLA2</shortName>
        <ecNumber>3.1.1.4</ecNumber>
    </recommendedName>
    <alternativeName>
        <fullName>Phosphatidylcholine 2-acylhydrolase</fullName>
    </alternativeName>
</protein>
<name>PA2B1_MICPY</name>
<dbReference type="EC" id="3.1.1.4"/>
<dbReference type="SMR" id="P0CAS9"/>
<dbReference type="GO" id="GO:0005576">
    <property type="term" value="C:extracellular region"/>
    <property type="evidence" value="ECO:0007669"/>
    <property type="project" value="UniProtKB-SubCell"/>
</dbReference>
<dbReference type="GO" id="GO:0005509">
    <property type="term" value="F:calcium ion binding"/>
    <property type="evidence" value="ECO:0007669"/>
    <property type="project" value="InterPro"/>
</dbReference>
<dbReference type="GO" id="GO:0004623">
    <property type="term" value="F:phospholipase A2 activity"/>
    <property type="evidence" value="ECO:0007669"/>
    <property type="project" value="UniProtKB-EC"/>
</dbReference>
<dbReference type="GO" id="GO:0090729">
    <property type="term" value="F:toxin activity"/>
    <property type="evidence" value="ECO:0007669"/>
    <property type="project" value="UniProtKB-KW"/>
</dbReference>
<dbReference type="GO" id="GO:0050482">
    <property type="term" value="P:arachidonate secretion"/>
    <property type="evidence" value="ECO:0007669"/>
    <property type="project" value="InterPro"/>
</dbReference>
<dbReference type="GO" id="GO:0016042">
    <property type="term" value="P:lipid catabolic process"/>
    <property type="evidence" value="ECO:0007669"/>
    <property type="project" value="UniProtKB-KW"/>
</dbReference>
<dbReference type="GO" id="GO:0006644">
    <property type="term" value="P:phospholipid metabolic process"/>
    <property type="evidence" value="ECO:0007669"/>
    <property type="project" value="InterPro"/>
</dbReference>
<dbReference type="Gene3D" id="1.20.90.10">
    <property type="entry name" value="Phospholipase A2 domain"/>
    <property type="match status" value="1"/>
</dbReference>
<dbReference type="InterPro" id="IPR001211">
    <property type="entry name" value="PLipase_A2"/>
</dbReference>
<dbReference type="InterPro" id="IPR016090">
    <property type="entry name" value="PLipase_A2_dom"/>
</dbReference>
<dbReference type="InterPro" id="IPR036444">
    <property type="entry name" value="PLipase_A2_dom_sf"/>
</dbReference>
<dbReference type="Pfam" id="PF00068">
    <property type="entry name" value="Phospholip_A2_1"/>
    <property type="match status" value="1"/>
</dbReference>
<dbReference type="PRINTS" id="PR00389">
    <property type="entry name" value="PHPHLIPASEA2"/>
</dbReference>
<dbReference type="SUPFAM" id="SSF48619">
    <property type="entry name" value="Phospholipase A2, PLA2"/>
    <property type="match status" value="1"/>
</dbReference>
<evidence type="ECO:0000250" key="1"/>
<evidence type="ECO:0000255" key="2">
    <source>
        <dbReference type="PROSITE-ProRule" id="PRU10035"/>
    </source>
</evidence>
<evidence type="ECO:0000255" key="3">
    <source>
        <dbReference type="PROSITE-ProRule" id="PRU10036"/>
    </source>
</evidence>
<evidence type="ECO:0000269" key="4">
    <source>
    </source>
</evidence>
<evidence type="ECO:0000305" key="5"/>
<sequence>HLLQFNKVIKFETRKNAIPFYAFYGCYCGWGGRG</sequence>
<reference key="1">
    <citation type="journal article" date="2009" name="Toxicon">
        <title>Biochemical characterization of the Micrurus pyrrhocryptus venom.</title>
        <authorList>
            <person name="Dokmetjian J.C."/>
            <person name="Del Canto S."/>
            <person name="Vinzon S."/>
            <person name="de Jimenez Bonino M.B."/>
        </authorList>
    </citation>
    <scope>PROTEIN SEQUENCE</scope>
    <scope>MASS SPECTROMETRY</scope>
    <source>
        <tissue>Venom</tissue>
    </source>
</reference>
<organism>
    <name type="scientific">Micrurus pyrrhocryptus</name>
    <name type="common">Coral snake</name>
    <dbReference type="NCBI Taxonomy" id="129468"/>
    <lineage>
        <taxon>Eukaryota</taxon>
        <taxon>Metazoa</taxon>
        <taxon>Chordata</taxon>
        <taxon>Craniata</taxon>
        <taxon>Vertebrata</taxon>
        <taxon>Euteleostomi</taxon>
        <taxon>Lepidosauria</taxon>
        <taxon>Squamata</taxon>
        <taxon>Bifurcata</taxon>
        <taxon>Unidentata</taxon>
        <taxon>Episquamata</taxon>
        <taxon>Toxicofera</taxon>
        <taxon>Serpentes</taxon>
        <taxon>Colubroidea</taxon>
        <taxon>Elapidae</taxon>
        <taxon>Elapinae</taxon>
        <taxon>Micrurus</taxon>
    </lineage>
</organism>